<feature type="chain" id="PRO_0000312212" description="Protein tyrosine phosphatase domain-containing protein 1">
    <location>
        <begin position="1"/>
        <end position="754"/>
    </location>
</feature>
<feature type="domain" description="Tyrosine-protein phosphatase" evidence="2">
    <location>
        <begin position="82"/>
        <end position="253"/>
    </location>
</feature>
<feature type="region of interest" description="Disordered" evidence="3">
    <location>
        <begin position="487"/>
        <end position="554"/>
    </location>
</feature>
<feature type="compositionally biased region" description="Polar residues" evidence="3">
    <location>
        <begin position="487"/>
        <end position="498"/>
    </location>
</feature>
<feature type="active site" description="Phosphocysteine intermediate" evidence="2">
    <location>
        <position position="190"/>
    </location>
</feature>
<feature type="modified residue" description="Phosphoserine" evidence="5">
    <location>
        <position position="392"/>
    </location>
</feature>
<feature type="modified residue" description="Phosphoserine" evidence="5">
    <location>
        <position position="394"/>
    </location>
</feature>
<feature type="modified residue" description="Phosphoserine" evidence="5">
    <location>
        <position position="547"/>
    </location>
</feature>
<feature type="splice variant" id="VSP_029736" description="In isoform 2." evidence="4">
    <original>MAAGVLPQNEQPYSTLVNNSECVANMKG</original>
    <variation>MQVQDATRRPSAVRFLSSFLQGRRHSTSDPVLRLQQARRGSGLGSGSATKLLSSSSLQVMVAVSSVSHAEGNPTFPERKR</variation>
    <location>
        <begin position="1"/>
        <end position="28"/>
    </location>
</feature>
<feature type="sequence variant" id="VAR_037455" description="In dbSNP:rs16909677.">
    <original>L</original>
    <variation>Q</variation>
    <location>
        <position position="571"/>
    </location>
</feature>
<feature type="sequence conflict" description="In Ref. 1; AAO13168." evidence="4" ref="1">
    <original>K</original>
    <variation>T</variation>
    <location>
        <position position="27"/>
    </location>
</feature>
<feature type="sequence conflict" description="In Ref. 4; AAH67120." evidence="4" ref="4">
    <original>V</original>
    <variation>F</variation>
    <location>
        <position position="343"/>
    </location>
</feature>
<feature type="sequence conflict" description="In Ref. 1; AAO13168." evidence="4" ref="1">
    <original>A</original>
    <variation>D</variation>
    <location>
        <position position="518"/>
    </location>
</feature>
<reference key="1">
    <citation type="submission" date="2002-10" db="EMBL/GenBank/DDBJ databases">
        <authorList>
            <person name="Guo J.H."/>
            <person name="Chen L."/>
            <person name="Yu L."/>
        </authorList>
    </citation>
    <scope>NUCLEOTIDE SEQUENCE [LARGE SCALE MRNA] (ISOFORM 1)</scope>
    <source>
        <tissue>Testis</tissue>
    </source>
</reference>
<reference key="2">
    <citation type="journal article" date="2004" name="Nature">
        <title>DNA sequence and analysis of human chromosome 9.</title>
        <authorList>
            <person name="Humphray S.J."/>
            <person name="Oliver K."/>
            <person name="Hunt A.R."/>
            <person name="Plumb R.W."/>
            <person name="Loveland J.E."/>
            <person name="Howe K.L."/>
            <person name="Andrews T.D."/>
            <person name="Searle S."/>
            <person name="Hunt S.E."/>
            <person name="Scott C.E."/>
            <person name="Jones M.C."/>
            <person name="Ainscough R."/>
            <person name="Almeida J.P."/>
            <person name="Ambrose K.D."/>
            <person name="Ashwell R.I.S."/>
            <person name="Babbage A.K."/>
            <person name="Babbage S."/>
            <person name="Bagguley C.L."/>
            <person name="Bailey J."/>
            <person name="Banerjee R."/>
            <person name="Barker D.J."/>
            <person name="Barlow K.F."/>
            <person name="Bates K."/>
            <person name="Beasley H."/>
            <person name="Beasley O."/>
            <person name="Bird C.P."/>
            <person name="Bray-Allen S."/>
            <person name="Brown A.J."/>
            <person name="Brown J.Y."/>
            <person name="Burford D."/>
            <person name="Burrill W."/>
            <person name="Burton J."/>
            <person name="Carder C."/>
            <person name="Carter N.P."/>
            <person name="Chapman J.C."/>
            <person name="Chen Y."/>
            <person name="Clarke G."/>
            <person name="Clark S.Y."/>
            <person name="Clee C.M."/>
            <person name="Clegg S."/>
            <person name="Collier R.E."/>
            <person name="Corby N."/>
            <person name="Crosier M."/>
            <person name="Cummings A.T."/>
            <person name="Davies J."/>
            <person name="Dhami P."/>
            <person name="Dunn M."/>
            <person name="Dutta I."/>
            <person name="Dyer L.W."/>
            <person name="Earthrowl M.E."/>
            <person name="Faulkner L."/>
            <person name="Fleming C.J."/>
            <person name="Frankish A."/>
            <person name="Frankland J.A."/>
            <person name="French L."/>
            <person name="Fricker D.G."/>
            <person name="Garner P."/>
            <person name="Garnett J."/>
            <person name="Ghori J."/>
            <person name="Gilbert J.G.R."/>
            <person name="Glison C."/>
            <person name="Grafham D.V."/>
            <person name="Gribble S."/>
            <person name="Griffiths C."/>
            <person name="Griffiths-Jones S."/>
            <person name="Grocock R."/>
            <person name="Guy J."/>
            <person name="Hall R.E."/>
            <person name="Hammond S."/>
            <person name="Harley J.L."/>
            <person name="Harrison E.S.I."/>
            <person name="Hart E.A."/>
            <person name="Heath P.D."/>
            <person name="Henderson C.D."/>
            <person name="Hopkins B.L."/>
            <person name="Howard P.J."/>
            <person name="Howden P.J."/>
            <person name="Huckle E."/>
            <person name="Johnson C."/>
            <person name="Johnson D."/>
            <person name="Joy A.A."/>
            <person name="Kay M."/>
            <person name="Keenan S."/>
            <person name="Kershaw J.K."/>
            <person name="Kimberley A.M."/>
            <person name="King A."/>
            <person name="Knights A."/>
            <person name="Laird G.K."/>
            <person name="Langford C."/>
            <person name="Lawlor S."/>
            <person name="Leongamornlert D.A."/>
            <person name="Leversha M."/>
            <person name="Lloyd C."/>
            <person name="Lloyd D.M."/>
            <person name="Lovell J."/>
            <person name="Martin S."/>
            <person name="Mashreghi-Mohammadi M."/>
            <person name="Matthews L."/>
            <person name="McLaren S."/>
            <person name="McLay K.E."/>
            <person name="McMurray A."/>
            <person name="Milne S."/>
            <person name="Nickerson T."/>
            <person name="Nisbett J."/>
            <person name="Nordsiek G."/>
            <person name="Pearce A.V."/>
            <person name="Peck A.I."/>
            <person name="Porter K.M."/>
            <person name="Pandian R."/>
            <person name="Pelan S."/>
            <person name="Phillimore B."/>
            <person name="Povey S."/>
            <person name="Ramsey Y."/>
            <person name="Rand V."/>
            <person name="Scharfe M."/>
            <person name="Sehra H.K."/>
            <person name="Shownkeen R."/>
            <person name="Sims S.K."/>
            <person name="Skuce C.D."/>
            <person name="Smith M."/>
            <person name="Steward C.A."/>
            <person name="Swarbreck D."/>
            <person name="Sycamore N."/>
            <person name="Tester J."/>
            <person name="Thorpe A."/>
            <person name="Tracey A."/>
            <person name="Tromans A."/>
            <person name="Thomas D.W."/>
            <person name="Wall M."/>
            <person name="Wallis J.M."/>
            <person name="West A.P."/>
            <person name="Whitehead S.L."/>
            <person name="Willey D.L."/>
            <person name="Williams S.A."/>
            <person name="Wilming L."/>
            <person name="Wray P.W."/>
            <person name="Young L."/>
            <person name="Ashurst J.L."/>
            <person name="Coulson A."/>
            <person name="Blocker H."/>
            <person name="Durbin R.M."/>
            <person name="Sulston J.E."/>
            <person name="Hubbard T."/>
            <person name="Jackson M.J."/>
            <person name="Bentley D.R."/>
            <person name="Beck S."/>
            <person name="Rogers J."/>
            <person name="Dunham I."/>
        </authorList>
    </citation>
    <scope>NUCLEOTIDE SEQUENCE [LARGE SCALE GENOMIC DNA]</scope>
</reference>
<reference key="3">
    <citation type="submission" date="2005-07" db="EMBL/GenBank/DDBJ databases">
        <authorList>
            <person name="Mural R.J."/>
            <person name="Istrail S."/>
            <person name="Sutton G.G."/>
            <person name="Florea L."/>
            <person name="Halpern A.L."/>
            <person name="Mobarry C.M."/>
            <person name="Lippert R."/>
            <person name="Walenz B."/>
            <person name="Shatkay H."/>
            <person name="Dew I."/>
            <person name="Miller J.R."/>
            <person name="Flanigan M.J."/>
            <person name="Edwards N.J."/>
            <person name="Bolanos R."/>
            <person name="Fasulo D."/>
            <person name="Halldorsson B.V."/>
            <person name="Hannenhalli S."/>
            <person name="Turner R."/>
            <person name="Yooseph S."/>
            <person name="Lu F."/>
            <person name="Nusskern D.R."/>
            <person name="Shue B.C."/>
            <person name="Zheng X.H."/>
            <person name="Zhong F."/>
            <person name="Delcher A.L."/>
            <person name="Huson D.H."/>
            <person name="Kravitz S.A."/>
            <person name="Mouchard L."/>
            <person name="Reinert K."/>
            <person name="Remington K.A."/>
            <person name="Clark A.G."/>
            <person name="Waterman M.S."/>
            <person name="Eichler E.E."/>
            <person name="Adams M.D."/>
            <person name="Hunkapiller M.W."/>
            <person name="Myers E.W."/>
            <person name="Venter J.C."/>
        </authorList>
    </citation>
    <scope>NUCLEOTIDE SEQUENCE [LARGE SCALE GENOMIC DNA]</scope>
</reference>
<reference key="4">
    <citation type="journal article" date="2004" name="Genome Res.">
        <title>The status, quality, and expansion of the NIH full-length cDNA project: the Mammalian Gene Collection (MGC).</title>
        <authorList>
            <consortium name="The MGC Project Team"/>
        </authorList>
    </citation>
    <scope>NUCLEOTIDE SEQUENCE [LARGE SCALE MRNA] (ISOFORM 1)</scope>
    <source>
        <tissue>Skin</tissue>
    </source>
</reference>
<reference key="5">
    <citation type="journal article" date="2004" name="Nat. Genet.">
        <title>Complete sequencing and characterization of 21,243 full-length human cDNAs.</title>
        <authorList>
            <person name="Ota T."/>
            <person name="Suzuki Y."/>
            <person name="Nishikawa T."/>
            <person name="Otsuki T."/>
            <person name="Sugiyama T."/>
            <person name="Irie R."/>
            <person name="Wakamatsu A."/>
            <person name="Hayashi K."/>
            <person name="Sato H."/>
            <person name="Nagai K."/>
            <person name="Kimura K."/>
            <person name="Makita H."/>
            <person name="Sekine M."/>
            <person name="Obayashi M."/>
            <person name="Nishi T."/>
            <person name="Shibahara T."/>
            <person name="Tanaka T."/>
            <person name="Ishii S."/>
            <person name="Yamamoto J."/>
            <person name="Saito K."/>
            <person name="Kawai Y."/>
            <person name="Isono Y."/>
            <person name="Nakamura Y."/>
            <person name="Nagahari K."/>
            <person name="Murakami K."/>
            <person name="Yasuda T."/>
            <person name="Iwayanagi T."/>
            <person name="Wagatsuma M."/>
            <person name="Shiratori A."/>
            <person name="Sudo H."/>
            <person name="Hosoiri T."/>
            <person name="Kaku Y."/>
            <person name="Kodaira H."/>
            <person name="Kondo H."/>
            <person name="Sugawara M."/>
            <person name="Takahashi M."/>
            <person name="Kanda K."/>
            <person name="Yokoi T."/>
            <person name="Furuya T."/>
            <person name="Kikkawa E."/>
            <person name="Omura Y."/>
            <person name="Abe K."/>
            <person name="Kamihara K."/>
            <person name="Katsuta N."/>
            <person name="Sato K."/>
            <person name="Tanikawa M."/>
            <person name="Yamazaki M."/>
            <person name="Ninomiya K."/>
            <person name="Ishibashi T."/>
            <person name="Yamashita H."/>
            <person name="Murakawa K."/>
            <person name="Fujimori K."/>
            <person name="Tanai H."/>
            <person name="Kimata M."/>
            <person name="Watanabe M."/>
            <person name="Hiraoka S."/>
            <person name="Chiba Y."/>
            <person name="Ishida S."/>
            <person name="Ono Y."/>
            <person name="Takiguchi S."/>
            <person name="Watanabe S."/>
            <person name="Yosida M."/>
            <person name="Hotuta T."/>
            <person name="Kusano J."/>
            <person name="Kanehori K."/>
            <person name="Takahashi-Fujii A."/>
            <person name="Hara H."/>
            <person name="Tanase T.-O."/>
            <person name="Nomura Y."/>
            <person name="Togiya S."/>
            <person name="Komai F."/>
            <person name="Hara R."/>
            <person name="Takeuchi K."/>
            <person name="Arita M."/>
            <person name="Imose N."/>
            <person name="Musashino K."/>
            <person name="Yuuki H."/>
            <person name="Oshima A."/>
            <person name="Sasaki N."/>
            <person name="Aotsuka S."/>
            <person name="Yoshikawa Y."/>
            <person name="Matsunawa H."/>
            <person name="Ichihara T."/>
            <person name="Shiohata N."/>
            <person name="Sano S."/>
            <person name="Moriya S."/>
            <person name="Momiyama H."/>
            <person name="Satoh N."/>
            <person name="Takami S."/>
            <person name="Terashima Y."/>
            <person name="Suzuki O."/>
            <person name="Nakagawa S."/>
            <person name="Senoh A."/>
            <person name="Mizoguchi H."/>
            <person name="Goto Y."/>
            <person name="Shimizu F."/>
            <person name="Wakebe H."/>
            <person name="Hishigaki H."/>
            <person name="Watanabe T."/>
            <person name="Sugiyama A."/>
            <person name="Takemoto M."/>
            <person name="Kawakami B."/>
            <person name="Yamazaki M."/>
            <person name="Watanabe K."/>
            <person name="Kumagai A."/>
            <person name="Itakura S."/>
            <person name="Fukuzumi Y."/>
            <person name="Fujimori Y."/>
            <person name="Komiyama M."/>
            <person name="Tashiro H."/>
            <person name="Tanigami A."/>
            <person name="Fujiwara T."/>
            <person name="Ono T."/>
            <person name="Yamada K."/>
            <person name="Fujii Y."/>
            <person name="Ozaki K."/>
            <person name="Hirao M."/>
            <person name="Ohmori Y."/>
            <person name="Kawabata A."/>
            <person name="Hikiji T."/>
            <person name="Kobatake N."/>
            <person name="Inagaki H."/>
            <person name="Ikema Y."/>
            <person name="Okamoto S."/>
            <person name="Okitani R."/>
            <person name="Kawakami T."/>
            <person name="Noguchi S."/>
            <person name="Itoh T."/>
            <person name="Shigeta K."/>
            <person name="Senba T."/>
            <person name="Matsumura K."/>
            <person name="Nakajima Y."/>
            <person name="Mizuno T."/>
            <person name="Morinaga M."/>
            <person name="Sasaki M."/>
            <person name="Togashi T."/>
            <person name="Oyama M."/>
            <person name="Hata H."/>
            <person name="Watanabe M."/>
            <person name="Komatsu T."/>
            <person name="Mizushima-Sugano J."/>
            <person name="Satoh T."/>
            <person name="Shirai Y."/>
            <person name="Takahashi Y."/>
            <person name="Nakagawa K."/>
            <person name="Okumura K."/>
            <person name="Nagase T."/>
            <person name="Nomura N."/>
            <person name="Kikuchi H."/>
            <person name="Masuho Y."/>
            <person name="Yamashita R."/>
            <person name="Nakai K."/>
            <person name="Yada T."/>
            <person name="Nakamura Y."/>
            <person name="Ohara O."/>
            <person name="Isogai T."/>
            <person name="Sugano S."/>
        </authorList>
    </citation>
    <scope>NUCLEOTIDE SEQUENCE [LARGE SCALE MRNA] OF 331-754 (ISOFORM 1)</scope>
    <source>
        <tissue>Amygdala</tissue>
        <tissue>Brain</tissue>
    </source>
</reference>
<reference key="6">
    <citation type="journal article" date="2013" name="J. Proteome Res.">
        <title>Toward a comprehensive characterization of a human cancer cell phosphoproteome.</title>
        <authorList>
            <person name="Zhou H."/>
            <person name="Di Palma S."/>
            <person name="Preisinger C."/>
            <person name="Peng M."/>
            <person name="Polat A.N."/>
            <person name="Heck A.J."/>
            <person name="Mohammed S."/>
        </authorList>
    </citation>
    <scope>PHOSPHORYLATION [LARGE SCALE ANALYSIS] AT SER-392; SER-394 AND SER-547</scope>
    <scope>IDENTIFICATION BY MASS SPECTROMETRY [LARGE SCALE ANALYSIS]</scope>
    <source>
        <tissue>Cervix carcinoma</tissue>
        <tissue>Erythroleukemia</tissue>
    </source>
</reference>
<comment type="function">
    <text evidence="1">May play roles in cilia formation and/or maintenance.</text>
</comment>
<comment type="interaction">
    <interactant intactId="EBI-11603375">
        <id>A2A3K4</id>
    </interactant>
    <interactant intactId="EBI-910">
        <id>P46109</id>
        <label>CRKL</label>
    </interactant>
    <organismsDiffer>false</organismsDiffer>
    <experiments>3</experiments>
</comment>
<comment type="interaction">
    <interactant intactId="EBI-11603375">
        <id>A2A3K4</id>
    </interactant>
    <interactant intactId="EBI-959949">
        <id>P28482</id>
        <label>MAPK1</label>
    </interactant>
    <organismsDiffer>false</organismsDiffer>
    <experiments>4</experiments>
</comment>
<comment type="interaction">
    <interactant intactId="EBI-11603375">
        <id>A2A3K4</id>
    </interactant>
    <interactant intactId="EBI-10172526">
        <id>Q9UJV3-2</id>
        <label>MID2</label>
    </interactant>
    <organismsDiffer>false</organismsDiffer>
    <experiments>3</experiments>
</comment>
<comment type="interaction">
    <interactant intactId="EBI-11603375">
        <id>A2A3K4</id>
    </interactant>
    <interactant intactId="EBI-11523345">
        <id>Q8IYF3-3</id>
        <label>TEX11</label>
    </interactant>
    <organismsDiffer>false</organismsDiffer>
    <experiments>3</experiments>
</comment>
<comment type="alternative products">
    <event type="alternative splicing"/>
    <isoform>
        <id>A2A3K4-1</id>
        <name>1</name>
        <sequence type="displayed"/>
    </isoform>
    <isoform>
        <id>A2A3K4-2</id>
        <name>2</name>
        <sequence type="described" ref="VSP_029736"/>
    </isoform>
</comment>
<comment type="similarity">
    <text evidence="4">Belongs to the protein-tyrosine phosphatase family. Non-receptor class PTPDC1 subfamily.</text>
</comment>
<comment type="sequence caution" evidence="4">
    <conflict type="erroneous initiation">
        <sequence resource="EMBL-CDS" id="BAC04391"/>
    </conflict>
</comment>
<comment type="sequence caution" evidence="4">
    <conflict type="erroneous initiation">
        <sequence resource="EMBL-CDS" id="BAC04421"/>
    </conflict>
</comment>
<proteinExistence type="evidence at protein level"/>
<accession>A2A3K4</accession>
<accession>Q5T3M4</accession>
<accession>Q6NXE8</accession>
<accession>Q8IWM1</accession>
<accession>Q8N1X4</accession>
<accession>Q8N9F5</accession>
<evidence type="ECO:0000250" key="1"/>
<evidence type="ECO:0000255" key="2">
    <source>
        <dbReference type="PROSITE-ProRule" id="PRU00160"/>
    </source>
</evidence>
<evidence type="ECO:0000256" key="3">
    <source>
        <dbReference type="SAM" id="MobiDB-lite"/>
    </source>
</evidence>
<evidence type="ECO:0000305" key="4"/>
<evidence type="ECO:0007744" key="5">
    <source>
    </source>
</evidence>
<dbReference type="EC" id="3.1.3.-"/>
<dbReference type="EMBL" id="AY171233">
    <property type="protein sequence ID" value="AAO13168.1"/>
    <property type="molecule type" value="mRNA"/>
</dbReference>
<dbReference type="EMBL" id="AL360020">
    <property type="status" value="NOT_ANNOTATED_CDS"/>
    <property type="molecule type" value="Genomic_DNA"/>
</dbReference>
<dbReference type="EMBL" id="CH471089">
    <property type="protein sequence ID" value="EAW62876.1"/>
    <property type="molecule type" value="Genomic_DNA"/>
</dbReference>
<dbReference type="EMBL" id="BC067120">
    <property type="protein sequence ID" value="AAH67120.1"/>
    <property type="molecule type" value="mRNA"/>
</dbReference>
<dbReference type="EMBL" id="AK094631">
    <property type="protein sequence ID" value="BAC04391.1"/>
    <property type="status" value="ALT_INIT"/>
    <property type="molecule type" value="mRNA"/>
</dbReference>
<dbReference type="EMBL" id="AK094773">
    <property type="protein sequence ID" value="BAC04421.1"/>
    <property type="status" value="ALT_INIT"/>
    <property type="molecule type" value="mRNA"/>
</dbReference>
<dbReference type="CCDS" id="CCDS6707.1">
    <molecule id="A2A3K4-1"/>
</dbReference>
<dbReference type="CCDS" id="CCDS6708.1">
    <molecule id="A2A3K4-2"/>
</dbReference>
<dbReference type="RefSeq" id="NP_001240758.1">
    <property type="nucleotide sequence ID" value="NM_001253829.1"/>
</dbReference>
<dbReference type="RefSeq" id="NP_001240759.1">
    <property type="nucleotide sequence ID" value="NM_001253830.1"/>
</dbReference>
<dbReference type="RefSeq" id="NP_689635.3">
    <molecule id="A2A3K4-2"/>
    <property type="nucleotide sequence ID" value="NM_152422.4"/>
</dbReference>
<dbReference type="RefSeq" id="NP_818931.1">
    <molecule id="A2A3K4-1"/>
    <property type="nucleotide sequence ID" value="NM_177995.3"/>
</dbReference>
<dbReference type="RefSeq" id="XP_005251768.1">
    <property type="nucleotide sequence ID" value="XM_005251711.4"/>
</dbReference>
<dbReference type="RefSeq" id="XP_011516542.1">
    <property type="nucleotide sequence ID" value="XM_011518240.2"/>
</dbReference>
<dbReference type="RefSeq" id="XP_011516543.1">
    <property type="nucleotide sequence ID" value="XM_011518241.2"/>
</dbReference>
<dbReference type="RefSeq" id="XP_016869769.1">
    <property type="nucleotide sequence ID" value="XM_017014280.1"/>
</dbReference>
<dbReference type="RefSeq" id="XP_016869770.1">
    <property type="nucleotide sequence ID" value="XM_017014281.1"/>
</dbReference>
<dbReference type="SMR" id="A2A3K4"/>
<dbReference type="BioGRID" id="126515">
    <property type="interactions" value="71"/>
</dbReference>
<dbReference type="FunCoup" id="A2A3K4">
    <property type="interactions" value="1049"/>
</dbReference>
<dbReference type="IntAct" id="A2A3K4">
    <property type="interactions" value="30"/>
</dbReference>
<dbReference type="MINT" id="A2A3K4"/>
<dbReference type="STRING" id="9606.ENSP00000477817"/>
<dbReference type="DEPOD" id="PTPDC1"/>
<dbReference type="GlyGen" id="A2A3K4">
    <property type="glycosylation" value="1 site, 1 N-linked glycan (1 site)"/>
</dbReference>
<dbReference type="iPTMnet" id="A2A3K4"/>
<dbReference type="PhosphoSitePlus" id="A2A3K4"/>
<dbReference type="BioMuta" id="PTPDC1"/>
<dbReference type="jPOST" id="A2A3K4"/>
<dbReference type="MassIVE" id="A2A3K4"/>
<dbReference type="PaxDb" id="9606-ENSP00000477817"/>
<dbReference type="PeptideAtlas" id="A2A3K4"/>
<dbReference type="ProteomicsDB" id="283">
    <molecule id="A2A3K4-1"/>
</dbReference>
<dbReference type="ProteomicsDB" id="284">
    <molecule id="A2A3K4-2"/>
</dbReference>
<dbReference type="Pumba" id="A2A3K4"/>
<dbReference type="Antibodypedia" id="13927">
    <property type="antibodies" value="18 antibodies from 7 providers"/>
</dbReference>
<dbReference type="DNASU" id="138639"/>
<dbReference type="Ensembl" id="ENST00000288976.3">
    <molecule id="A2A3K4-2"/>
    <property type="protein sequence ID" value="ENSP00000288976.3"/>
    <property type="gene ID" value="ENSG00000158079.16"/>
</dbReference>
<dbReference type="Ensembl" id="ENST00000375360.7">
    <molecule id="A2A3K4-1"/>
    <property type="protein sequence ID" value="ENSP00000364509.3"/>
    <property type="gene ID" value="ENSG00000158079.16"/>
</dbReference>
<dbReference type="Ensembl" id="ENST00000650567.1">
    <molecule id="A2A3K4-1"/>
    <property type="protein sequence ID" value="ENSP00000497158.1"/>
    <property type="gene ID" value="ENSG00000158079.16"/>
</dbReference>
<dbReference type="GeneID" id="138639"/>
<dbReference type="KEGG" id="hsa:138639"/>
<dbReference type="UCSC" id="uc004auf.2">
    <molecule id="A2A3K4-1"/>
    <property type="organism name" value="human"/>
</dbReference>
<dbReference type="AGR" id="HGNC:30184"/>
<dbReference type="CTD" id="138639"/>
<dbReference type="GeneCards" id="PTPDC1"/>
<dbReference type="HGNC" id="HGNC:30184">
    <property type="gene designation" value="PTPDC1"/>
</dbReference>
<dbReference type="HPA" id="ENSG00000158079">
    <property type="expression patterns" value="Low tissue specificity"/>
</dbReference>
<dbReference type="neXtProt" id="NX_A2A3K4"/>
<dbReference type="OpenTargets" id="ENSG00000158079"/>
<dbReference type="PharmGKB" id="PA134940207"/>
<dbReference type="VEuPathDB" id="HostDB:ENSG00000158079"/>
<dbReference type="eggNOG" id="KOG1720">
    <property type="taxonomic scope" value="Eukaryota"/>
</dbReference>
<dbReference type="GeneTree" id="ENSGT00390000004113"/>
<dbReference type="HOGENOM" id="CLU_019730_0_0_1"/>
<dbReference type="InParanoid" id="A2A3K4"/>
<dbReference type="OrthoDB" id="542013at2759"/>
<dbReference type="PAN-GO" id="A2A3K4">
    <property type="GO annotations" value="3 GO annotations based on evolutionary models"/>
</dbReference>
<dbReference type="PhylomeDB" id="A2A3K4"/>
<dbReference type="TreeFam" id="TF313460"/>
<dbReference type="PathwayCommons" id="A2A3K4"/>
<dbReference type="SignaLink" id="A2A3K4"/>
<dbReference type="BioGRID-ORCS" id="138639">
    <property type="hits" value="15 hits in 1170 CRISPR screens"/>
</dbReference>
<dbReference type="ChiTaRS" id="PTPDC1">
    <property type="organism name" value="human"/>
</dbReference>
<dbReference type="GenomeRNAi" id="138639"/>
<dbReference type="Pharos" id="A2A3K4">
    <property type="development level" value="Tdark"/>
</dbReference>
<dbReference type="PRO" id="PR:A2A3K4"/>
<dbReference type="Proteomes" id="UP000005640">
    <property type="component" value="Chromosome 9"/>
</dbReference>
<dbReference type="RNAct" id="A2A3K4">
    <property type="molecule type" value="protein"/>
</dbReference>
<dbReference type="Bgee" id="ENSG00000158079">
    <property type="expression patterns" value="Expressed in tibial nerve and 161 other cell types or tissues"/>
</dbReference>
<dbReference type="ExpressionAtlas" id="A2A3K4">
    <property type="expression patterns" value="baseline and differential"/>
</dbReference>
<dbReference type="GO" id="GO:0005737">
    <property type="term" value="C:cytoplasm"/>
    <property type="evidence" value="ECO:0000318"/>
    <property type="project" value="GO_Central"/>
</dbReference>
<dbReference type="GO" id="GO:0005829">
    <property type="term" value="C:cytosol"/>
    <property type="evidence" value="ECO:0000314"/>
    <property type="project" value="HPA"/>
</dbReference>
<dbReference type="GO" id="GO:0005654">
    <property type="term" value="C:nucleoplasm"/>
    <property type="evidence" value="ECO:0000314"/>
    <property type="project" value="HPA"/>
</dbReference>
<dbReference type="GO" id="GO:0004725">
    <property type="term" value="F:protein tyrosine phosphatase activity"/>
    <property type="evidence" value="ECO:0000318"/>
    <property type="project" value="GO_Central"/>
</dbReference>
<dbReference type="GO" id="GO:0060271">
    <property type="term" value="P:cilium assembly"/>
    <property type="evidence" value="ECO:0000318"/>
    <property type="project" value="GO_Central"/>
</dbReference>
<dbReference type="CDD" id="cd14506">
    <property type="entry name" value="PTP_PTPDC1"/>
    <property type="match status" value="1"/>
</dbReference>
<dbReference type="FunFam" id="3.90.190.10:FF:000027">
    <property type="entry name" value="Protein tyrosine phosphatase domain containing 1"/>
    <property type="match status" value="1"/>
</dbReference>
<dbReference type="Gene3D" id="3.90.190.10">
    <property type="entry name" value="Protein tyrosine phosphatase superfamily"/>
    <property type="match status" value="1"/>
</dbReference>
<dbReference type="InterPro" id="IPR000340">
    <property type="entry name" value="Dual-sp_phosphatase_cat-dom"/>
</dbReference>
<dbReference type="InterPro" id="IPR029021">
    <property type="entry name" value="Prot-tyrosine_phosphatase-like"/>
</dbReference>
<dbReference type="InterPro" id="IPR050561">
    <property type="entry name" value="PTP"/>
</dbReference>
<dbReference type="InterPro" id="IPR049573">
    <property type="entry name" value="PTPDC1_PTP"/>
</dbReference>
<dbReference type="InterPro" id="IPR016130">
    <property type="entry name" value="Tyr_Pase_AS"/>
</dbReference>
<dbReference type="InterPro" id="IPR003595">
    <property type="entry name" value="Tyr_Pase_cat"/>
</dbReference>
<dbReference type="InterPro" id="IPR000387">
    <property type="entry name" value="Tyr_Pase_dom"/>
</dbReference>
<dbReference type="InterPro" id="IPR020422">
    <property type="entry name" value="TYR_PHOSPHATASE_DUAL_dom"/>
</dbReference>
<dbReference type="PANTHER" id="PTHR23339">
    <property type="entry name" value="TYROSINE SPECIFIC PROTEIN PHOSPHATASE AND DUAL SPECIFICITY PROTEIN PHOSPHATASE"/>
    <property type="match status" value="1"/>
</dbReference>
<dbReference type="Pfam" id="PF00782">
    <property type="entry name" value="DSPc"/>
    <property type="match status" value="1"/>
</dbReference>
<dbReference type="SMART" id="SM00195">
    <property type="entry name" value="DSPc"/>
    <property type="match status" value="1"/>
</dbReference>
<dbReference type="SMART" id="SM00404">
    <property type="entry name" value="PTPc_motif"/>
    <property type="match status" value="1"/>
</dbReference>
<dbReference type="SUPFAM" id="SSF52799">
    <property type="entry name" value="(Phosphotyrosine protein) phosphatases II"/>
    <property type="match status" value="1"/>
</dbReference>
<dbReference type="PROSITE" id="PS00383">
    <property type="entry name" value="TYR_PHOSPHATASE_1"/>
    <property type="match status" value="1"/>
</dbReference>
<dbReference type="PROSITE" id="PS50056">
    <property type="entry name" value="TYR_PHOSPHATASE_2"/>
    <property type="match status" value="1"/>
</dbReference>
<dbReference type="PROSITE" id="PS50054">
    <property type="entry name" value="TYR_PHOSPHATASE_DUAL"/>
    <property type="match status" value="1"/>
</dbReference>
<gene>
    <name type="primary">PTPDC1</name>
    <name type="synonym">PTP9Q22</name>
</gene>
<keyword id="KW-0025">Alternative splicing</keyword>
<keyword id="KW-0970">Cilium biogenesis/degradation</keyword>
<keyword id="KW-0378">Hydrolase</keyword>
<keyword id="KW-0597">Phosphoprotein</keyword>
<keyword id="KW-0904">Protein phosphatase</keyword>
<keyword id="KW-1267">Proteomics identification</keyword>
<keyword id="KW-1185">Reference proteome</keyword>
<name>PTPC1_HUMAN</name>
<organism>
    <name type="scientific">Homo sapiens</name>
    <name type="common">Human</name>
    <dbReference type="NCBI Taxonomy" id="9606"/>
    <lineage>
        <taxon>Eukaryota</taxon>
        <taxon>Metazoa</taxon>
        <taxon>Chordata</taxon>
        <taxon>Craniata</taxon>
        <taxon>Vertebrata</taxon>
        <taxon>Euteleostomi</taxon>
        <taxon>Mammalia</taxon>
        <taxon>Eutheria</taxon>
        <taxon>Euarchontoglires</taxon>
        <taxon>Primates</taxon>
        <taxon>Haplorrhini</taxon>
        <taxon>Catarrhini</taxon>
        <taxon>Hominidae</taxon>
        <taxon>Homo</taxon>
    </lineage>
</organism>
<sequence>MAAGVLPQNEQPYSTLVNNSECVANMKGNLERPTPKYTKVGERLRHVIPGHMACSMACGGRACKYENPARWSEQEQAIKGVYSSWVTDNILAMARPSSELLEKYHIIDQFLSHGIKTIINLQRPGEHASCGNPLEQESGFTYLPEAFMEAGIYFYNFGWKDYGVASLTTILDMVKVMTFALQEGKVAIHCHAGLGRTGVLIACYLVFATRMTADQAIIFVRAKRPNSIQTRGQLLCVREFTQFLTPLRNIFSCCDPKAHAVTLPQYLIRQRHLLHGYEARLLKHVPKIIHLVCKLLLDLAENRPVMMKDVSEGPGLSAEIEKTMSEMVTMQLDKELLRHDSDVSNPPNPTAVAADFDNRGMIFSNEQQFDPLWKRRNVECLQPLTHLKRRLSYSDSDLKRAENLLEQGETPQTVPAQILVGHKPRQQKLISHCYIPQSPEPDLHKEALVRSTLSFWSQSKFGGLEGLKDNGSPIFHGRIIPKEAQQSGAFSADVSGSHSPGEPVSPSFANVHKDPNPAHQQVSHCQCKTHGVGSPGSVRQNSRTPRSPLDCGSSPKAQFLVEHETQDSKDLSEAASHSALQSELSAEARRILAAKALANLNESVEKEELKRKVEMWQKELNSRDGAWERICGERDPFILCSLMWSWVEQLKEPVITKEDVDMLVDRRADAAEALFLLEKGQHQTILCVLHCIVNLQTIPVDVEEAFLAHAIKAFTKVNFDSENGPTVYNTLKKIFKHTLEEKRKMTKDGPKPGL</sequence>
<protein>
    <recommendedName>
        <fullName>Protein tyrosine phosphatase domain-containing protein 1</fullName>
        <ecNumber>3.1.3.-</ecNumber>
    </recommendedName>
</protein>